<name>RBS4_SOLLC</name>
<reference key="1">
    <citation type="journal article" date="1987" name="Mol. Gen. Genet.">
        <title>Genomic organization, sequence analysis and expression of all five genes encoding the small subunit of ribulose-1,5-bisphosphate carboxylase/oxygenase from tomato.</title>
        <authorList>
            <person name="Sugita M."/>
            <person name="Manzara T."/>
            <person name="Pichersky E."/>
            <person name="Cashmore A."/>
            <person name="Gruissem W."/>
        </authorList>
    </citation>
    <scope>NUCLEOTIDE SEQUENCE [GENOMIC DNA]</scope>
    <source>
        <strain>cv. VFNT Cherry LA1221</strain>
    </source>
</reference>
<reference key="2">
    <citation type="journal article" date="1993" name="Plant Mol. Biol.">
        <title>Developmental and organ-specific changes in DNA-protein interactions in the tomato rbcS1, rbcS2 and rbcS3A promoter regions.</title>
        <authorList>
            <person name="Manzara T."/>
            <person name="Carrasco P."/>
            <person name="Gruissem W."/>
        </authorList>
    </citation>
    <scope>NUCLEOTIDE SEQUENCE [GENOMIC DNA] OF 1-8</scope>
    <source>
        <strain>cv. VFNT Cherry LA1221</strain>
        <tissue>Root</tissue>
    </source>
</reference>
<proteinExistence type="inferred from homology"/>
<accession>P05349</accession>
<keyword id="KW-0051">Antiviral defense</keyword>
<keyword id="KW-0113">Calvin cycle</keyword>
<keyword id="KW-0120">Carbon dioxide fixation</keyword>
<keyword id="KW-0965">Cell junction</keyword>
<keyword id="KW-0150">Chloroplast</keyword>
<keyword id="KW-0945">Host-virus interaction</keyword>
<keyword id="KW-0601">Photorespiration</keyword>
<keyword id="KW-0602">Photosynthesis</keyword>
<keyword id="KW-0934">Plastid</keyword>
<keyword id="KW-1185">Reference proteome</keyword>
<keyword id="KW-0809">Transit peptide</keyword>
<dbReference type="EMBL" id="D11112">
    <property type="protein sequence ID" value="BAA01888.1"/>
    <property type="molecule type" value="Genomic_DNA"/>
</dbReference>
<dbReference type="EMBL" id="X05985">
    <property type="protein sequence ID" value="CAA29403.1"/>
    <property type="molecule type" value="Genomic_DNA"/>
</dbReference>
<dbReference type="EMBL" id="X66071">
    <property type="protein sequence ID" value="CAA46871.1"/>
    <property type="molecule type" value="Genomic_DNA"/>
</dbReference>
<dbReference type="PIR" id="S01107">
    <property type="entry name" value="RKTO3B"/>
</dbReference>
<dbReference type="RefSeq" id="NP_001296139.1">
    <property type="nucleotide sequence ID" value="NM_001309210.1"/>
</dbReference>
<dbReference type="RefSeq" id="XP_019067516.1">
    <property type="nucleotide sequence ID" value="XM_019211971.1"/>
</dbReference>
<dbReference type="SMR" id="P05349"/>
<dbReference type="FunCoup" id="P05349">
    <property type="interactions" value="1438"/>
</dbReference>
<dbReference type="STRING" id="4081.P05349"/>
<dbReference type="PaxDb" id="4081-Solyc02g085950.2.1"/>
<dbReference type="EnsemblPlants" id="Solyc02g085950.3.1">
    <property type="protein sequence ID" value="Solyc02g085950.3.1"/>
    <property type="gene ID" value="Solyc02g085950.3"/>
</dbReference>
<dbReference type="GeneID" id="101268337"/>
<dbReference type="Gramene" id="Solyc02g085950.3.1">
    <property type="protein sequence ID" value="Solyc02g085950.3.1"/>
    <property type="gene ID" value="Solyc02g085950.3"/>
</dbReference>
<dbReference type="KEGG" id="sly:101268337"/>
<dbReference type="eggNOG" id="ENOG502QT0M">
    <property type="taxonomic scope" value="Eukaryota"/>
</dbReference>
<dbReference type="HOGENOM" id="CLU_098114_1_0_1"/>
<dbReference type="InParanoid" id="P05349"/>
<dbReference type="OMA" id="LRSHWIP"/>
<dbReference type="OrthoDB" id="2013936at2759"/>
<dbReference type="PhylomeDB" id="P05349"/>
<dbReference type="Proteomes" id="UP000004994">
    <property type="component" value="Chromosome 2"/>
</dbReference>
<dbReference type="ExpressionAtlas" id="P05349">
    <property type="expression patterns" value="baseline and differential"/>
</dbReference>
<dbReference type="GO" id="GO:0009507">
    <property type="term" value="C:chloroplast"/>
    <property type="evidence" value="ECO:0007669"/>
    <property type="project" value="UniProtKB-SubCell"/>
</dbReference>
<dbReference type="GO" id="GO:0009506">
    <property type="term" value="C:plasmodesma"/>
    <property type="evidence" value="ECO:0007669"/>
    <property type="project" value="UniProtKB-SubCell"/>
</dbReference>
<dbReference type="GO" id="GO:0016984">
    <property type="term" value="F:ribulose-bisphosphate carboxylase activity"/>
    <property type="evidence" value="ECO:0007669"/>
    <property type="project" value="UniProtKB-UniRule"/>
</dbReference>
<dbReference type="GO" id="GO:0051607">
    <property type="term" value="P:defense response to virus"/>
    <property type="evidence" value="ECO:0007669"/>
    <property type="project" value="UniProtKB-KW"/>
</dbReference>
<dbReference type="GO" id="GO:0009853">
    <property type="term" value="P:photorespiration"/>
    <property type="evidence" value="ECO:0007669"/>
    <property type="project" value="UniProtKB-KW"/>
</dbReference>
<dbReference type="GO" id="GO:0019253">
    <property type="term" value="P:reductive pentose-phosphate cycle"/>
    <property type="evidence" value="ECO:0007669"/>
    <property type="project" value="UniProtKB-UniRule"/>
</dbReference>
<dbReference type="CDD" id="cd03527">
    <property type="entry name" value="RuBisCO_small"/>
    <property type="match status" value="1"/>
</dbReference>
<dbReference type="FunFam" id="3.30.190.10:FF:000001">
    <property type="entry name" value="Ribulose bisphosphate carboxylase small chain, chloroplastic"/>
    <property type="match status" value="1"/>
</dbReference>
<dbReference type="Gene3D" id="3.30.190.10">
    <property type="entry name" value="Ribulose bisphosphate carboxylase, small subunit"/>
    <property type="match status" value="1"/>
</dbReference>
<dbReference type="HAMAP" id="MF_00859">
    <property type="entry name" value="RuBisCO_S_bact"/>
    <property type="match status" value="1"/>
</dbReference>
<dbReference type="InterPro" id="IPR024681">
    <property type="entry name" value="RuBisCO_ssu"/>
</dbReference>
<dbReference type="InterPro" id="IPR000894">
    <property type="entry name" value="RuBisCO_ssu_dom"/>
</dbReference>
<dbReference type="InterPro" id="IPR024680">
    <property type="entry name" value="RuBisCO_ssu_N"/>
</dbReference>
<dbReference type="InterPro" id="IPR036385">
    <property type="entry name" value="RuBisCO_ssu_sf"/>
</dbReference>
<dbReference type="PANTHER" id="PTHR31262">
    <property type="entry name" value="RIBULOSE BISPHOSPHATE CARBOXYLASE SMALL CHAIN 1, CHLOROPLASTIC"/>
    <property type="match status" value="1"/>
</dbReference>
<dbReference type="PANTHER" id="PTHR31262:SF10">
    <property type="entry name" value="RIBULOSE BISPHOSPHATE CARBOXYLASE SMALL SUBUNIT 1A, CHLOROPLASTIC-RELATED"/>
    <property type="match status" value="1"/>
</dbReference>
<dbReference type="Pfam" id="PF12338">
    <property type="entry name" value="RbcS"/>
    <property type="match status" value="1"/>
</dbReference>
<dbReference type="Pfam" id="PF00101">
    <property type="entry name" value="RuBisCO_small"/>
    <property type="match status" value="1"/>
</dbReference>
<dbReference type="PRINTS" id="PR00152">
    <property type="entry name" value="RUBISCOSMALL"/>
</dbReference>
<dbReference type="SMART" id="SM00961">
    <property type="entry name" value="RuBisCO_small"/>
    <property type="match status" value="1"/>
</dbReference>
<dbReference type="SUPFAM" id="SSF55239">
    <property type="entry name" value="RuBisCO, small subunit"/>
    <property type="match status" value="1"/>
</dbReference>
<gene>
    <name evidence="2" type="primary">RBCS4</name>
    <name evidence="3" type="synonym">RBCS-3B</name>
</gene>
<protein>
    <recommendedName>
        <fullName evidence="2">Ribulose bisphosphate carboxylase small subunit, chloroplastic 4</fullName>
        <shortName evidence="2">RuBisCO small subunit 4</shortName>
    </recommendedName>
    <alternativeName>
        <fullName evidence="3">Ribulose bisphosphate carboxylase small chain 3B, chloroplastic</fullName>
        <shortName evidence="3">RuBisCO small subunit 3B</shortName>
    </alternativeName>
</protein>
<feature type="transit peptide" description="Chloroplast" evidence="2">
    <location>
        <begin position="1"/>
        <end position="56"/>
    </location>
</feature>
<feature type="chain" id="PRO_0000031521" description="Ribulose bisphosphate carboxylase small subunit, chloroplastic 4" evidence="2">
    <location>
        <begin position="57"/>
        <end position="180"/>
    </location>
</feature>
<sequence>MASSIVSSAAVATRGNGAQASMVAPFTGLKSTASFPVSRKQNLDITSIASNGGRVSCMQVWPPINMKKYETLSYLPDLSDEQLLSEIEYLLKNGWVPCLEFETEHGFVYRENHKSPGYYDGRYWTMWKLPMFGCTDATQVLAEVQEAKKAYPQAWVRIIGFDNVRQVQCISFIAYKPEGY</sequence>
<evidence type="ECO:0000250" key="1">
    <source>
        <dbReference type="UniProtKB" id="A0A0S4IJL0"/>
    </source>
</evidence>
<evidence type="ECO:0000255" key="2">
    <source>
        <dbReference type="HAMAP-Rule" id="MF_00860"/>
    </source>
</evidence>
<evidence type="ECO:0000303" key="3">
    <source>
    </source>
</evidence>
<evidence type="ECO:0000305" key="4"/>
<comment type="function">
    <text evidence="1 2">RuBisCO catalyzes two reactions: the carboxylation of D-ribulose 1,5-bisphosphate, the primary event in carbon dioxide fixation, as well as the oxidative fragmentation of the pentose substrate. Both reactions occur simultaneously and in competition at the same active site. Although the small subunit is not catalytic it is essential for maximal activity. Involved in antiviral defenses (By similarity).</text>
</comment>
<comment type="subunit">
    <text evidence="2">Heterohexadecamer of 8 large and 8 small subunits.</text>
</comment>
<comment type="subunit">
    <text evidence="4">(Microbial infection) Binds to tobamovirus movement protein; this interaction seems required for viral systemic movement.</text>
</comment>
<comment type="subcellular location">
    <subcellularLocation>
        <location evidence="2">Plastid</location>
        <location evidence="2">Chloroplast</location>
    </subcellularLocation>
</comment>
<comment type="subcellular location">
    <subcellularLocation>
        <location evidence="1">Cell junction</location>
        <location evidence="1">Plasmodesma</location>
    </subcellularLocation>
    <text evidence="1">(Microbial infection) May be present in virus replication complexes (VRCs) of tobamovirus infected cells.</text>
</comment>
<comment type="miscellaneous">
    <text evidence="2">The basic functional RuBisCO is composed of a large chain homodimer in a 'head-to-tail' conformation. In form I RuBisCO this homodimer is arranged in a barrel-like tetramer with the small subunits forming a tetrameric 'cap' on each end of the 'barrel'.</text>
</comment>
<comment type="similarity">
    <text evidence="2">Belongs to the RuBisCO small chain family.</text>
</comment>
<organism>
    <name type="scientific">Solanum lycopersicum</name>
    <name type="common">Tomato</name>
    <name type="synonym">Lycopersicon esculentum</name>
    <dbReference type="NCBI Taxonomy" id="4081"/>
    <lineage>
        <taxon>Eukaryota</taxon>
        <taxon>Viridiplantae</taxon>
        <taxon>Streptophyta</taxon>
        <taxon>Embryophyta</taxon>
        <taxon>Tracheophyta</taxon>
        <taxon>Spermatophyta</taxon>
        <taxon>Magnoliopsida</taxon>
        <taxon>eudicotyledons</taxon>
        <taxon>Gunneridae</taxon>
        <taxon>Pentapetalae</taxon>
        <taxon>asterids</taxon>
        <taxon>lamiids</taxon>
        <taxon>Solanales</taxon>
        <taxon>Solanaceae</taxon>
        <taxon>Solanoideae</taxon>
        <taxon>Solaneae</taxon>
        <taxon>Solanum</taxon>
        <taxon>Solanum subgen. Lycopersicon</taxon>
    </lineage>
</organism>